<gene>
    <name type="primary">pph-3</name>
    <name type="synonym">ppp-1</name>
    <name type="ORF">NCU00043</name>
</gene>
<accession>Q9UW86</accession>
<accession>O59927</accession>
<accession>Q7RV51</accession>
<dbReference type="EC" id="3.1.3.16"/>
<dbReference type="EMBL" id="AF049853">
    <property type="protein sequence ID" value="AAC05275.1"/>
    <property type="molecule type" value="mRNA"/>
</dbReference>
<dbReference type="EMBL" id="AF124149">
    <property type="protein sequence ID" value="AAD47567.1"/>
    <property type="molecule type" value="Genomic_DNA"/>
</dbReference>
<dbReference type="EMBL" id="CM002238">
    <property type="protein sequence ID" value="EAA26918.2"/>
    <property type="molecule type" value="Genomic_DNA"/>
</dbReference>
<dbReference type="RefSeq" id="XP_956154.2">
    <property type="nucleotide sequence ID" value="XM_951061.3"/>
</dbReference>
<dbReference type="SMR" id="Q9UW86"/>
<dbReference type="FunCoup" id="Q9UW86">
    <property type="interactions" value="944"/>
</dbReference>
<dbReference type="STRING" id="367110.Q9UW86"/>
<dbReference type="PaxDb" id="5141-EFNCRP00000000314"/>
<dbReference type="EnsemblFungi" id="EAA26918">
    <property type="protein sequence ID" value="EAA26918"/>
    <property type="gene ID" value="NCU00043"/>
</dbReference>
<dbReference type="GeneID" id="3872306"/>
<dbReference type="KEGG" id="ncr:NCU00043"/>
<dbReference type="VEuPathDB" id="FungiDB:NCU00043"/>
<dbReference type="HOGENOM" id="CLU_004962_0_0_1"/>
<dbReference type="InParanoid" id="Q9UW86"/>
<dbReference type="OrthoDB" id="1930084at2759"/>
<dbReference type="Proteomes" id="UP000001805">
    <property type="component" value="Chromosome 3, Linkage Group III"/>
</dbReference>
<dbReference type="GO" id="GO:1902716">
    <property type="term" value="C:cell cortex of growing cell tip"/>
    <property type="evidence" value="ECO:0007669"/>
    <property type="project" value="EnsemblFungi"/>
</dbReference>
<dbReference type="GO" id="GO:0140472">
    <property type="term" value="C:cell cortex of non-growing cell tip"/>
    <property type="evidence" value="ECO:0007669"/>
    <property type="project" value="EnsemblFungi"/>
</dbReference>
<dbReference type="GO" id="GO:0032153">
    <property type="term" value="C:cell division site"/>
    <property type="evidence" value="ECO:0007669"/>
    <property type="project" value="EnsemblFungi"/>
</dbReference>
<dbReference type="GO" id="GO:0061638">
    <property type="term" value="C:CENP-A containing chromatin"/>
    <property type="evidence" value="ECO:0007669"/>
    <property type="project" value="EnsemblFungi"/>
</dbReference>
<dbReference type="GO" id="GO:0005737">
    <property type="term" value="C:cytoplasm"/>
    <property type="evidence" value="ECO:0000318"/>
    <property type="project" value="GO_Central"/>
</dbReference>
<dbReference type="GO" id="GO:1990567">
    <property type="term" value="C:DPS complex"/>
    <property type="evidence" value="ECO:0007669"/>
    <property type="project" value="EnsemblFungi"/>
</dbReference>
<dbReference type="GO" id="GO:0005847">
    <property type="term" value="C:mRNA cleavage and polyadenylation specificity factor complex"/>
    <property type="evidence" value="ECO:0007669"/>
    <property type="project" value="EnsemblFungi"/>
</dbReference>
<dbReference type="GO" id="GO:0005634">
    <property type="term" value="C:nucleus"/>
    <property type="evidence" value="ECO:0000318"/>
    <property type="project" value="GO_Central"/>
</dbReference>
<dbReference type="GO" id="GO:0072357">
    <property type="term" value="C:PTW/PP1 phosphatase complex"/>
    <property type="evidence" value="ECO:0007669"/>
    <property type="project" value="EnsemblFungi"/>
</dbReference>
<dbReference type="GO" id="GO:0046872">
    <property type="term" value="F:metal ion binding"/>
    <property type="evidence" value="ECO:0007669"/>
    <property type="project" value="UniProtKB-KW"/>
</dbReference>
<dbReference type="GO" id="GO:0004722">
    <property type="term" value="F:protein serine/threonine phosphatase activity"/>
    <property type="evidence" value="ECO:0000318"/>
    <property type="project" value="GO_Central"/>
</dbReference>
<dbReference type="GO" id="GO:0008608">
    <property type="term" value="P:attachment of spindle microtubules to kinetochore"/>
    <property type="evidence" value="ECO:0007669"/>
    <property type="project" value="EnsemblFungi"/>
</dbReference>
<dbReference type="GO" id="GO:0098653">
    <property type="term" value="P:centromere clustering"/>
    <property type="evidence" value="ECO:0007669"/>
    <property type="project" value="EnsemblFungi"/>
</dbReference>
<dbReference type="GO" id="GO:0007059">
    <property type="term" value="P:chromosome segregation"/>
    <property type="evidence" value="ECO:0000318"/>
    <property type="project" value="GO_Central"/>
</dbReference>
<dbReference type="GO" id="GO:1902426">
    <property type="term" value="P:deactivation of mitotic spindle assembly checkpoint"/>
    <property type="evidence" value="ECO:0007669"/>
    <property type="project" value="EnsemblFungi"/>
</dbReference>
<dbReference type="GO" id="GO:1902425">
    <property type="term" value="P:positive regulation of attachment of mitotic spindle microtubules to kinetochore"/>
    <property type="evidence" value="ECO:0007669"/>
    <property type="project" value="EnsemblFungi"/>
</dbReference>
<dbReference type="GO" id="GO:1904595">
    <property type="term" value="P:positive regulation of termination of RNA polymerase II transcription"/>
    <property type="evidence" value="ECO:0007669"/>
    <property type="project" value="EnsemblFungi"/>
</dbReference>
<dbReference type="GO" id="GO:0007346">
    <property type="term" value="P:regulation of mitotic cell cycle"/>
    <property type="evidence" value="ECO:0000318"/>
    <property type="project" value="GO_Central"/>
</dbReference>
<dbReference type="CDD" id="cd07414">
    <property type="entry name" value="MPP_PP1_PPKL"/>
    <property type="match status" value="1"/>
</dbReference>
<dbReference type="FunFam" id="3.60.21.10:FF:000004">
    <property type="entry name" value="Serine/threonine-protein phosphatase"/>
    <property type="match status" value="1"/>
</dbReference>
<dbReference type="Gene3D" id="3.60.21.10">
    <property type="match status" value="1"/>
</dbReference>
<dbReference type="InterPro" id="IPR004843">
    <property type="entry name" value="Calcineurin-like_PHP_ApaH"/>
</dbReference>
<dbReference type="InterPro" id="IPR029052">
    <property type="entry name" value="Metallo-depent_PP-like"/>
</dbReference>
<dbReference type="InterPro" id="IPR050341">
    <property type="entry name" value="PP1_catalytic_subunit"/>
</dbReference>
<dbReference type="InterPro" id="IPR006186">
    <property type="entry name" value="Ser/Thr-sp_prot-phosphatase"/>
</dbReference>
<dbReference type="InterPro" id="IPR031675">
    <property type="entry name" value="STPPase_N"/>
</dbReference>
<dbReference type="PANTHER" id="PTHR11668">
    <property type="entry name" value="SERINE/THREONINE PROTEIN PHOSPHATASE"/>
    <property type="match status" value="1"/>
</dbReference>
<dbReference type="PANTHER" id="PTHR11668:SF300">
    <property type="entry name" value="SERINE_THREONINE-PROTEIN PHOSPHATASE"/>
    <property type="match status" value="1"/>
</dbReference>
<dbReference type="Pfam" id="PF00149">
    <property type="entry name" value="Metallophos"/>
    <property type="match status" value="1"/>
</dbReference>
<dbReference type="Pfam" id="PF16891">
    <property type="entry name" value="STPPase_N"/>
    <property type="match status" value="1"/>
</dbReference>
<dbReference type="PRINTS" id="PR00114">
    <property type="entry name" value="STPHPHTASE"/>
</dbReference>
<dbReference type="SMART" id="SM00156">
    <property type="entry name" value="PP2Ac"/>
    <property type="match status" value="1"/>
</dbReference>
<dbReference type="SUPFAM" id="SSF56300">
    <property type="entry name" value="Metallo-dependent phosphatases"/>
    <property type="match status" value="1"/>
</dbReference>
<dbReference type="PROSITE" id="PS00125">
    <property type="entry name" value="SER_THR_PHOSPHATASE"/>
    <property type="match status" value="1"/>
</dbReference>
<feature type="chain" id="PRO_0000058817" description="Serine/threonine-protein phosphatase PP1">
    <location>
        <begin position="1"/>
        <end position="308"/>
    </location>
</feature>
<feature type="active site" description="Proton donor" evidence="1">
    <location>
        <position position="125"/>
    </location>
</feature>
<feature type="binding site" evidence="1">
    <location>
        <position position="64"/>
    </location>
    <ligand>
        <name>Mn(2+)</name>
        <dbReference type="ChEBI" id="CHEBI:29035"/>
        <label>1</label>
    </ligand>
</feature>
<feature type="binding site" evidence="1">
    <location>
        <position position="66"/>
    </location>
    <ligand>
        <name>Mn(2+)</name>
        <dbReference type="ChEBI" id="CHEBI:29035"/>
        <label>1</label>
    </ligand>
</feature>
<feature type="binding site" evidence="1">
    <location>
        <position position="92"/>
    </location>
    <ligand>
        <name>Mn(2+)</name>
        <dbReference type="ChEBI" id="CHEBI:29035"/>
        <label>1</label>
    </ligand>
</feature>
<feature type="binding site" evidence="1">
    <location>
        <position position="92"/>
    </location>
    <ligand>
        <name>Mn(2+)</name>
        <dbReference type="ChEBI" id="CHEBI:29035"/>
        <label>2</label>
    </ligand>
</feature>
<feature type="binding site" evidence="1">
    <location>
        <position position="124"/>
    </location>
    <ligand>
        <name>Mn(2+)</name>
        <dbReference type="ChEBI" id="CHEBI:29035"/>
        <label>2</label>
    </ligand>
</feature>
<feature type="binding site" evidence="1">
    <location>
        <position position="173"/>
    </location>
    <ligand>
        <name>Mn(2+)</name>
        <dbReference type="ChEBI" id="CHEBI:29035"/>
        <label>2</label>
    </ligand>
</feature>
<feature type="binding site" evidence="1">
    <location>
        <position position="248"/>
    </location>
    <ligand>
        <name>Mn(2+)</name>
        <dbReference type="ChEBI" id="CHEBI:29035"/>
        <label>2</label>
    </ligand>
</feature>
<feature type="sequence conflict" description="In Ref. 2; AAC05275." evidence="2" ref="2">
    <original>D</original>
    <variation>E</variation>
    <location>
        <position position="154"/>
    </location>
</feature>
<proteinExistence type="evidence at transcript level"/>
<comment type="catalytic activity">
    <reaction>
        <text>O-phospho-L-seryl-[protein] + H2O = L-seryl-[protein] + phosphate</text>
        <dbReference type="Rhea" id="RHEA:20629"/>
        <dbReference type="Rhea" id="RHEA-COMP:9863"/>
        <dbReference type="Rhea" id="RHEA-COMP:11604"/>
        <dbReference type="ChEBI" id="CHEBI:15377"/>
        <dbReference type="ChEBI" id="CHEBI:29999"/>
        <dbReference type="ChEBI" id="CHEBI:43474"/>
        <dbReference type="ChEBI" id="CHEBI:83421"/>
        <dbReference type="EC" id="3.1.3.16"/>
    </reaction>
</comment>
<comment type="catalytic activity">
    <reaction>
        <text>O-phospho-L-threonyl-[protein] + H2O = L-threonyl-[protein] + phosphate</text>
        <dbReference type="Rhea" id="RHEA:47004"/>
        <dbReference type="Rhea" id="RHEA-COMP:11060"/>
        <dbReference type="Rhea" id="RHEA-COMP:11605"/>
        <dbReference type="ChEBI" id="CHEBI:15377"/>
        <dbReference type="ChEBI" id="CHEBI:30013"/>
        <dbReference type="ChEBI" id="CHEBI:43474"/>
        <dbReference type="ChEBI" id="CHEBI:61977"/>
        <dbReference type="EC" id="3.1.3.16"/>
    </reaction>
</comment>
<comment type="cofactor">
    <cofactor evidence="1">
        <name>Mn(2+)</name>
        <dbReference type="ChEBI" id="CHEBI:29035"/>
    </cofactor>
    <text evidence="1">Binds 2 manganese ions per subunit.</text>
</comment>
<comment type="subcellular location">
    <subcellularLocation>
        <location evidence="1">Cytoplasm</location>
    </subcellularLocation>
</comment>
<comment type="similarity">
    <text evidence="2">Belongs to the PPP phosphatase family. PP-1 subfamily.</text>
</comment>
<reference key="1">
    <citation type="journal article" date="1999" name="Braz. J. Med. Biol. Res.">
        <title>Searching for the role of protein phosphatases in eukaryotic microorganisms.</title>
        <authorList>
            <person name="da-Silva A.M."/>
            <person name="Zapella P.D.A."/>
            <person name="Andrioli L.P.M."/>
            <person name="Campanha R.B."/>
            <person name="Fiorini L.C."/>
            <person name="Etchebehere L.C."/>
            <person name="da-Costa-Maia J.C."/>
            <person name="Terenzi H.F."/>
        </authorList>
    </citation>
    <scope>NUCLEOTIDE SEQUENCE [MRNA]</scope>
    <source>
        <strain>ATCC 24698 / 74-OR23-1A / CBS 708.71 / DSM 1257 / FGSC 987</strain>
    </source>
</reference>
<reference key="2">
    <citation type="journal article" date="2003" name="Comp. Biochem. Physiol.">
        <title>Expression of protein phosphatase 1 during the asexual development of Neurospora crassa.</title>
        <authorList>
            <person name="Zeke T."/>
            <person name="Kokai E."/>
            <person name="Szoor B."/>
            <person name="Yatzkan E."/>
            <person name="Yarden O."/>
            <person name="Szirak K."/>
            <person name="Feher Z."/>
            <person name="Bagossi P."/>
            <person name="Gergely P."/>
            <person name="Dombradi V."/>
        </authorList>
    </citation>
    <scope>NUCLEOTIDE SEQUENCE [GENOMIC DNA]</scope>
    <source>
        <strain>74-OR23-1VA / FGSC 2489</strain>
    </source>
</reference>
<reference key="3">
    <citation type="journal article" date="2003" name="Nature">
        <title>The genome sequence of the filamentous fungus Neurospora crassa.</title>
        <authorList>
            <person name="Galagan J.E."/>
            <person name="Calvo S.E."/>
            <person name="Borkovich K.A."/>
            <person name="Selker E.U."/>
            <person name="Read N.D."/>
            <person name="Jaffe D.B."/>
            <person name="FitzHugh W."/>
            <person name="Ma L.-J."/>
            <person name="Smirnov S."/>
            <person name="Purcell S."/>
            <person name="Rehman B."/>
            <person name="Elkins T."/>
            <person name="Engels R."/>
            <person name="Wang S."/>
            <person name="Nielsen C.B."/>
            <person name="Butler J."/>
            <person name="Endrizzi M."/>
            <person name="Qui D."/>
            <person name="Ianakiev P."/>
            <person name="Bell-Pedersen D."/>
            <person name="Nelson M.A."/>
            <person name="Werner-Washburne M."/>
            <person name="Selitrennikoff C.P."/>
            <person name="Kinsey J.A."/>
            <person name="Braun E.L."/>
            <person name="Zelter A."/>
            <person name="Schulte U."/>
            <person name="Kothe G.O."/>
            <person name="Jedd G."/>
            <person name="Mewes H.-W."/>
            <person name="Staben C."/>
            <person name="Marcotte E."/>
            <person name="Greenberg D."/>
            <person name="Roy A."/>
            <person name="Foley K."/>
            <person name="Naylor J."/>
            <person name="Stange-Thomann N."/>
            <person name="Barrett R."/>
            <person name="Gnerre S."/>
            <person name="Kamal M."/>
            <person name="Kamvysselis M."/>
            <person name="Mauceli E.W."/>
            <person name="Bielke C."/>
            <person name="Rudd S."/>
            <person name="Frishman D."/>
            <person name="Krystofova S."/>
            <person name="Rasmussen C."/>
            <person name="Metzenberg R.L."/>
            <person name="Perkins D.D."/>
            <person name="Kroken S."/>
            <person name="Cogoni C."/>
            <person name="Macino G."/>
            <person name="Catcheside D.E.A."/>
            <person name="Li W."/>
            <person name="Pratt R.J."/>
            <person name="Osmani S.A."/>
            <person name="DeSouza C.P.C."/>
            <person name="Glass N.L."/>
            <person name="Orbach M.J."/>
            <person name="Berglund J.A."/>
            <person name="Voelker R."/>
            <person name="Yarden O."/>
            <person name="Plamann M."/>
            <person name="Seiler S."/>
            <person name="Dunlap J.C."/>
            <person name="Radford A."/>
            <person name="Aramayo R."/>
            <person name="Natvig D.O."/>
            <person name="Alex L.A."/>
            <person name="Mannhaupt G."/>
            <person name="Ebbole D.J."/>
            <person name="Freitag M."/>
            <person name="Paulsen I."/>
            <person name="Sachs M.S."/>
            <person name="Lander E.S."/>
            <person name="Nusbaum C."/>
            <person name="Birren B.W."/>
        </authorList>
    </citation>
    <scope>NUCLEOTIDE SEQUENCE [LARGE SCALE GENOMIC DNA]</scope>
    <source>
        <strain>ATCC 24698 / 74-OR23-1A / CBS 708.71 / DSM 1257 / FGSC 987</strain>
    </source>
</reference>
<protein>
    <recommendedName>
        <fullName>Serine/threonine-protein phosphatase PP1</fullName>
        <ecNumber>3.1.3.16</ecNumber>
    </recommendedName>
    <alternativeName>
        <fullName>Phosphoprotein phosphatase 1</fullName>
    </alternativeName>
</protein>
<keyword id="KW-0963">Cytoplasm</keyword>
<keyword id="KW-0378">Hydrolase</keyword>
<keyword id="KW-0464">Manganese</keyword>
<keyword id="KW-0479">Metal-binding</keyword>
<keyword id="KW-0904">Protein phosphatase</keyword>
<keyword id="KW-1185">Reference proteome</keyword>
<evidence type="ECO:0000250" key="1"/>
<evidence type="ECO:0000305" key="2"/>
<organism>
    <name type="scientific">Neurospora crassa (strain ATCC 24698 / 74-OR23-1A / CBS 708.71 / DSM 1257 / FGSC 987)</name>
    <dbReference type="NCBI Taxonomy" id="367110"/>
    <lineage>
        <taxon>Eukaryota</taxon>
        <taxon>Fungi</taxon>
        <taxon>Dikarya</taxon>
        <taxon>Ascomycota</taxon>
        <taxon>Pezizomycotina</taxon>
        <taxon>Sordariomycetes</taxon>
        <taxon>Sordariomycetidae</taxon>
        <taxon>Sordariales</taxon>
        <taxon>Sordariaceae</taxon>
        <taxon>Neurospora</taxon>
    </lineage>
</organism>
<sequence>MADHTEVDLDSIIDRLLEVRGSRPGKQVQLLEAEIRYLCTKAREIFISQPILLELEAPIKICGDIHGQYYDLLRLFEYGGFPPEANYLFLGDYVDRGKQSLETICLLLAYKIKYPENFFILRGNHECASINRIYGFYDECKRRYNIKLWKTFTDCFNCLPIAAIIDEKIFTMHGGLSPDLNSMEQIRRVMRPTDIPDCGLLCDLLWSDPDKDITGWSENDRGVSFTFGPDVVSRFLQKHDMDLICRAHQVVEDGYEFFSKRQLVTLFSAPNYCGEFDNAGAMMSVDESLLCSFQILKPAEKKQKFGRR</sequence>
<name>PP1_NEUCR</name>